<organism>
    <name type="scientific">Rotavirus A (strain RVA/SA11-Both/G3P5B[2])</name>
    <name type="common">RV-A</name>
    <name type="synonym">Simian Agent 11 (strain Both)</name>
    <dbReference type="NCBI Taxonomy" id="37137"/>
    <lineage>
        <taxon>Viruses</taxon>
        <taxon>Riboviria</taxon>
        <taxon>Orthornavirae</taxon>
        <taxon>Duplornaviricota</taxon>
        <taxon>Resentoviricetes</taxon>
        <taxon>Reovirales</taxon>
        <taxon>Sedoreoviridae</taxon>
        <taxon>Rotavirus</taxon>
        <taxon>Rotavirus A</taxon>
    </lineage>
</organism>
<organismHost>
    <name type="scientific">Macaca mulatta</name>
    <name type="common">Rhesus macaque</name>
    <dbReference type="NCBI Taxonomy" id="9544"/>
</organismHost>
<reference key="1">
    <citation type="journal article" date="1983" name="J. Virol.">
        <title>Coding assignment and nucleotide sequence of simian rotavirus SA11 gene segment 10: location of glycosylation sites suggests that the signal peptide is not cleaved.</title>
        <authorList>
            <person name="Both G.W."/>
            <person name="Siegman L.J."/>
            <person name="Bellamy A.R."/>
            <person name="Atkinson P.H."/>
        </authorList>
    </citation>
    <scope>NUCLEOTIDE SEQUENCE [GENOMIC RNA]</scope>
    <scope>SUBCELLULAR LOCATION</scope>
    <scope>STRUCTURE OF CARBOHYDRATE</scope>
    <scope>GLYCOSYLATION AT ASN-8 AND ASN-18</scope>
</reference>
<reference key="2">
    <citation type="journal article" date="2000" name="J. Virol.">
        <title>A functional NSP4 enterotoxin peptide secreted from rotavirus-infected cells.</title>
        <authorList>
            <person name="Zhang M."/>
            <person name="Zeng C.Q.-Y."/>
            <person name="Morris A.P."/>
            <person name="Estes M.K."/>
        </authorList>
    </citation>
    <scope>PROTEIN SEQUENCE OF 112-120</scope>
    <scope>PROTEOLYTIC CLEAVAGE</scope>
    <scope>FUNCTION</scope>
</reference>
<reference key="3">
    <citation type="journal article" date="1992" name="J. Virol.">
        <title>Transient expression and mutational analysis of the rotavirus intracellular receptor: the C-terminal methionine residue is essential for ligand binding.</title>
        <authorList>
            <person name="Taylor J.A."/>
            <person name="Meyer J.C."/>
            <person name="Legge M.A."/>
            <person name="O'Brien J.A."/>
            <person name="Street J.E."/>
            <person name="Lord V.J."/>
            <person name="Bergmann C.C."/>
            <person name="Bellamy A.R."/>
        </authorList>
    </citation>
    <scope>FUNCTION</scope>
    <scope>SUBUNIT</scope>
    <scope>SUBCELLULAR LOCATION</scope>
    <scope>MUTAGENESIS OF CYS-63; CYS-71; MET-175 AND 174-ALA--MET-175</scope>
</reference>
<reference key="4">
    <citation type="journal article" date="1995" name="J. Virol.">
        <title>The rotavirus nonstructural glycoprotein NSP4 mobilizes Ca2+ from the endoplasmic reticulum.</title>
        <authorList>
            <person name="Tian P."/>
            <person name="Estes M.K."/>
            <person name="Hu Y."/>
            <person name="Ball J.M."/>
            <person name="Zeng C.Q.-Y."/>
            <person name="Schilling W.P."/>
        </authorList>
    </citation>
    <scope>FUNCTION</scope>
</reference>
<reference key="5">
    <citation type="journal article" date="1996" name="EMBO J.">
        <title>The cytoplasmic tail of NSP4, the endoplasmic reticulum-localized non-structural glycoprotein of rotavirus, contains distinct virus binding and coiled coil domains.</title>
        <authorList>
            <person name="Taylor J.A."/>
            <person name="O'Brien J.A."/>
            <person name="Yeager M."/>
        </authorList>
    </citation>
    <scope>COILED-COIL DOMAIN</scope>
</reference>
<reference key="6">
    <citation type="journal article" date="1997" name="Proc. Natl. Acad. Sci. U.S.A.">
        <title>The rotavirus enterotoxin NSP4 mobilizes intracellular calcium in human intestinal cells by stimulating phospholipase C-mediated inositol 1,4,5-trisphosphate production.</title>
        <authorList>
            <person name="Dong Y."/>
            <person name="Zeng C.Q.-Y."/>
            <person name="Ball J.M."/>
            <person name="Estes M.K."/>
            <person name="Morris A.P."/>
        </authorList>
    </citation>
    <scope>FUNCTION</scope>
</reference>
<reference key="7">
    <citation type="journal article" date="2000" name="EMBO J.">
        <title>Immobilization of the early secretory pathway by a virus glycoprotein that binds to microtubules.</title>
        <authorList>
            <person name="Xu A."/>
            <person name="Bellamy A.R."/>
            <person name="Taylor J.A."/>
        </authorList>
    </citation>
    <scope>INTERACTION WITH MICROTUBULES</scope>
    <scope>SUBCELLULAR LOCATION</scope>
</reference>
<reference key="8">
    <citation type="journal article" date="2000" name="J. Virol.">
        <title>Probing the structure of rotavirus NSP4: a short sequence at the extreme C terminus mediates binding to the inner capsid particle.</title>
        <authorList>
            <person name="O'Brien J.A."/>
            <person name="Taylor J.A."/>
            <person name="Bellamy A.R."/>
        </authorList>
    </citation>
    <scope>INTERACTION WITH ICP</scope>
    <scope>MUTAGENESIS OF TYR-166</scope>
</reference>
<reference key="9">
    <citation type="journal article" date="2003" name="J. Gen. Virol.">
        <title>A cytoplasmic region of the NSP4 enterotoxin of rotavirus is involved in retention in the endoplasmic reticulum.</title>
        <authorList>
            <person name="Mirazimi A."/>
            <person name="Magnusson K.-E."/>
            <person name="Svensson L."/>
        </authorList>
    </citation>
    <scope>ER RETENTION SIGNAL</scope>
</reference>
<reference key="10">
    <citation type="journal article" date="2006" name="J. Virol.">
        <title>The rotavirus enterotoxin NSP4 directly interacts with the caveolar structural protein caveolin-1.</title>
        <authorList>
            <person name="Parr R.D."/>
            <person name="Storey S.M."/>
            <person name="Mitchell D.M."/>
            <person name="McIntosh A.L."/>
            <person name="Zhou M."/>
            <person name="Mir K.D."/>
            <person name="Ball J.M."/>
        </authorList>
    </citation>
    <scope>INTERACTION WITH HUMAN CAV1</scope>
    <scope>SUBCELLULAR LOCATION</scope>
</reference>
<reference key="11">
    <citation type="journal article" date="2006" name="J. Virol.">
        <title>Rotavirus NSP4 induces a novel vesicular compartment regulated by calcium and associated with viroplasms.</title>
        <authorList>
            <person name="Berkova Z."/>
            <person name="Crawford S.E."/>
            <person name="Trugnan G."/>
            <person name="Yoshimori T."/>
            <person name="Morris A.P."/>
            <person name="Estes M.K."/>
        </authorList>
    </citation>
    <scope>SUBCELLULAR LOCATION</scope>
</reference>
<reference key="12">
    <citation type="journal article" date="2006" name="J. Virol.">
        <title>Rotavirus nonstructural glycoprotein NSP4 is secreted from the apical surfaces of polarized epithelial cells.</title>
        <authorList>
            <person name="Bugarcic A."/>
            <person name="Taylor J.A."/>
        </authorList>
    </citation>
    <scope>SUBCELLULAR LOCATION</scope>
    <scope>FUNCTION</scope>
</reference>
<reference key="13">
    <citation type="journal article" date="2007" name="J. Virol.">
        <title>Full-length, glycosylated NSP4 is localized to plasma membrane caveolae by a novel raft isolation technique.</title>
        <authorList>
            <person name="Storey S.M."/>
            <person name="Gibbons T.F."/>
            <person name="Williams C.V."/>
            <person name="Parr R.D."/>
            <person name="Schroeder F."/>
            <person name="Ball J.M."/>
        </authorList>
    </citation>
    <scope>INTERACTION WITH HUMAN CAV1</scope>
    <scope>SUBCELLULAR LOCATION</scope>
    <scope>GLYCOSYLATION</scope>
    <source>
        <strain>SA11-4F</strain>
    </source>
</reference>
<reference key="14">
    <citation type="journal article" date="2008" name="Proc. Natl. Acad. Sci. U.S.A.">
        <title>Inaugural article: integrins alpha1beta1 and alpha2beta1 are receptors for the rotavirus enterotoxin.</title>
        <authorList>
            <person name="Seo N.-S."/>
            <person name="Zeng C.Q.-Y."/>
            <person name="Hyser J.M."/>
            <person name="Utama B."/>
            <person name="Crawford S.E."/>
            <person name="Kim K.J."/>
            <person name="Hoeoek M."/>
            <person name="Estes M.K."/>
        </authorList>
    </citation>
    <scope>INTERACTION WITH HUMAN INTEGRIN ITGA1/ITGB1 HETERODIMER</scope>
    <scope>INTERACTION WITH HUMAN INTEGRIN ITGA2/ITGB1 HETERODIMER</scope>
    <scope>MUTAGENESIS OF GLU-120</scope>
</reference>
<reference key="15">
    <citation type="journal article" date="2010" name="MBio">
        <title>Rotavirus disrupts calcium homeostasis by NSP4 viroporin activity.</title>
        <authorList>
            <person name="Hyser J.M."/>
            <person name="Collinson-Pautz M.R."/>
            <person name="Utama B."/>
            <person name="Estes M.K."/>
        </authorList>
    </citation>
    <scope>FUNCTION</scope>
    <scope>SUBCELLULAR LOCATION</scope>
</reference>
<reference key="16">
    <citation type="journal article" date="2000" name="J. Mol. Biol.">
        <title>Crystal structure of the oligomerization domain of NSP4 from rotavirus reveals a core metal-binding site.</title>
        <authorList>
            <person name="Bowman G.D."/>
            <person name="Nodelman I.M."/>
            <person name="Levy O."/>
            <person name="Lin S.L."/>
            <person name="Tian P."/>
            <person name="Zamb T.J."/>
            <person name="Udem S.A."/>
            <person name="Venkataraghavan B."/>
            <person name="Schutt C.E."/>
        </authorList>
    </citation>
    <scope>X-RAY CRYSTALLOGRAPHY (1.86 ANGSTROMS) OF 95-137 IN COMPLEX WITH CALCIUM OR STRONTIUM</scope>
    <scope>METAL-BINDING AT GLN-123 AND GLU-120</scope>
    <scope>SUBUNIT</scope>
</reference>
<accession>P04512</accession>
<proteinExistence type="evidence at protein level"/>
<dbReference type="EMBL" id="K01138">
    <property type="protein sequence ID" value="AAA47291.1"/>
    <property type="molecule type" value="Genomic_RNA"/>
</dbReference>
<dbReference type="PIR" id="A04140">
    <property type="entry name" value="VGXRTS"/>
</dbReference>
<dbReference type="PDB" id="1G1I">
    <property type="method" value="X-ray"/>
    <property type="resolution" value="2.00 A"/>
    <property type="chains" value="A/B=95-137"/>
</dbReference>
<dbReference type="PDB" id="1G1J">
    <property type="method" value="X-ray"/>
    <property type="resolution" value="1.86 A"/>
    <property type="chains" value="A/B=95-137"/>
</dbReference>
<dbReference type="PDB" id="2O1K">
    <property type="method" value="X-ray"/>
    <property type="resolution" value="1.67 A"/>
    <property type="chains" value="A/B=95-146"/>
</dbReference>
<dbReference type="PDBsum" id="1G1I"/>
<dbReference type="PDBsum" id="1G1J"/>
<dbReference type="PDBsum" id="2O1K"/>
<dbReference type="SMR" id="P04512"/>
<dbReference type="DIP" id="DIP-46136N"/>
<dbReference type="IntAct" id="P04512">
    <property type="interactions" value="2"/>
</dbReference>
<dbReference type="TCDB" id="1.A.94.1.1">
    <property type="family name" value="the rotavirus non-structural glycoprotein 4 viroporin (nsp4) family"/>
</dbReference>
<dbReference type="iPTMnet" id="P04512"/>
<dbReference type="EvolutionaryTrace" id="P04512"/>
<dbReference type="Proteomes" id="UP000007180">
    <property type="component" value="Genome"/>
</dbReference>
<dbReference type="GO" id="GO:0005576">
    <property type="term" value="C:extracellular region"/>
    <property type="evidence" value="ECO:0007669"/>
    <property type="project" value="UniProtKB-SubCell"/>
</dbReference>
<dbReference type="GO" id="GO:0044155">
    <property type="term" value="C:host caveola"/>
    <property type="evidence" value="ECO:0007669"/>
    <property type="project" value="UniProtKB-SubCell"/>
</dbReference>
<dbReference type="GO" id="GO:0044169">
    <property type="term" value="C:host cell rough endoplasmic reticulum membrane"/>
    <property type="evidence" value="ECO:0007669"/>
    <property type="project" value="UniProtKB-SubCell"/>
</dbReference>
<dbReference type="GO" id="GO:0016020">
    <property type="term" value="C:membrane"/>
    <property type="evidence" value="ECO:0007669"/>
    <property type="project" value="UniProtKB-UniRule"/>
</dbReference>
<dbReference type="GO" id="GO:0015267">
    <property type="term" value="F:channel activity"/>
    <property type="evidence" value="ECO:0007669"/>
    <property type="project" value="UniProtKB-KW"/>
</dbReference>
<dbReference type="GO" id="GO:0046872">
    <property type="term" value="F:metal ion binding"/>
    <property type="evidence" value="ECO:0007669"/>
    <property type="project" value="UniProtKB-UniRule"/>
</dbReference>
<dbReference type="GO" id="GO:0090729">
    <property type="term" value="F:toxin activity"/>
    <property type="evidence" value="ECO:0007669"/>
    <property type="project" value="UniProtKB-UniRule"/>
</dbReference>
<dbReference type="GO" id="GO:0034220">
    <property type="term" value="P:monoatomic ion transmembrane transport"/>
    <property type="evidence" value="ECO:0007669"/>
    <property type="project" value="UniProtKB-KW"/>
</dbReference>
<dbReference type="GO" id="GO:0039520">
    <property type="term" value="P:symbiont-mediated activation of host autophagy"/>
    <property type="evidence" value="ECO:0007669"/>
    <property type="project" value="UniProtKB-KW"/>
</dbReference>
<dbReference type="GO" id="GO:0016032">
    <property type="term" value="P:viral process"/>
    <property type="evidence" value="ECO:0007669"/>
    <property type="project" value="UniProtKB-UniRule"/>
</dbReference>
<dbReference type="FunFam" id="1.20.5.430:FF:000005">
    <property type="entry name" value="Non-structural glycoprotein 4"/>
    <property type="match status" value="1"/>
</dbReference>
<dbReference type="Gene3D" id="1.20.5.430">
    <property type="match status" value="1"/>
</dbReference>
<dbReference type="HAMAP" id="MF_04091">
    <property type="entry name" value="ROTA_NSP4"/>
    <property type="match status" value="1"/>
</dbReference>
<dbReference type="InterPro" id="IPR002107">
    <property type="entry name" value="Rotavirus_NSP4"/>
</dbReference>
<dbReference type="Pfam" id="PF01452">
    <property type="entry name" value="Rota_NSP4"/>
    <property type="match status" value="1"/>
</dbReference>
<dbReference type="SUPFAM" id="SSF58030">
    <property type="entry name" value="Rotavirus nonstructural proteins"/>
    <property type="match status" value="1"/>
</dbReference>
<protein>
    <recommendedName>
        <fullName evidence="2">Non-structural glycoprotein 4</fullName>
        <shortName evidence="2">NSP4</shortName>
    </recommendedName>
    <alternativeName>
        <fullName evidence="2">NCVP5</fullName>
    </alternativeName>
    <alternativeName>
        <fullName evidence="2">NS28</fullName>
    </alternativeName>
</protein>
<sequence>MEKLTDLNYTLSVITLMNNTLHTILEDPGMAYFPYIASVLTGLFALNKASIPTMKIALKTSKCSYKVVKYCIVTIFNTLLKLAGYKEQITTKDEIEKQMDRVVKEMRRQLEMIDKLTTREIEQVELLKRIYDKLTVQTTGEIDMTKEINQKNVRTLEEWESGKNPYEPREVTAAM</sequence>
<comment type="function">
    <text evidence="2 11 13 14">Plays an essential role in the virus replication cycle by acting as a viroporin. Creates a pore in the host endoplasmic reticulum and as a consequence releases Ca(2+) in the cytoplasm of infected cell. In turn, high levels of cytoplasmic calcium trigger membrane trafficking and transport of viral ER-associated proteins to viroplasms, sites of viral genome replication and immature particle assembly.</text>
</comment>
<comment type="function">
    <text evidence="2 8 10">The secreted form acts as an enterotoxin that causes phospholipase C-dependent elevation of the intracellular calcium concentration in host intestinal mucosa cells. Increased concentration of intracellular calcium disrupts the cytoskeleton and the tight junctions, raising the paracellular permeability. Potentiates chloride ion secretion through a calcium ion-dependent signaling pathway, inducing age-dependent diarrhea. To perform this enterotoxigenic role in vivo, NSP4 is released from infected enterocytes in a soluble form capable of diffusing within the intestinal lumen and interacting with host plasma membrane receptors on neighboring epithelial cells such as integrins ITGA1/ITGB1 and ITGA2/ITGB1.</text>
</comment>
<comment type="subunit">
    <text evidence="2 3 4 5 6 7 9 10">Homotetramer. Interacts with the immature particle in the viroplasm. Interacts with host CAV1, early and late in infection. Interacts with host integrin ITGA1/ITGB1 heterodimer. Interacts with host integrin ITGA2/ITGB1 heterodimer (PubMed:18587047). Interaction with microtubules blocks trafficking to the Golgi apparatus (PubMed:11101519).</text>
</comment>
<comment type="interaction">
    <interactant intactId="EBI-15711650">
        <id>P04512</id>
    </interactant>
    <interactant intactId="EBI-2554465">
        <id>P56199</id>
        <label>ITGA1</label>
    </interactant>
    <organismsDiffer>true</organismsDiffer>
    <experiments>2</experiments>
</comment>
<comment type="interaction">
    <interactant intactId="EBI-15711650">
        <id>P04512</id>
    </interactant>
    <interactant intactId="EBI-702960">
        <id>P17301</id>
        <label>ITGA2</label>
    </interactant>
    <organismsDiffer>true</organismsDiffer>
    <experiments>3</experiments>
</comment>
<comment type="subcellular location">
    <subcellularLocation>
        <location evidence="1 2">Host rough endoplasmic reticulum membrane</location>
        <topology evidence="2">Single-pass type III membrane protein</topology>
    </subcellularLocation>
    <subcellularLocation>
        <location evidence="2 9">Host membrane</location>
        <location evidence="2 9">Host caveola</location>
        <topology evidence="2">Single-pass type III membrane protein</topology>
    </subcellularLocation>
    <subcellularLocation>
        <location evidence="2 8">Secreted</location>
    </subcellularLocation>
    <text evidence="2">NSP4 also localizes in vesicular structures which contain autophagosomal markers and associate with viroplasms in virus-infected cells. Additionally, a soluble form of glycosylated NSP4 is secreted despite retention of its transmembrane domain.</text>
</comment>
<comment type="domain">
    <text evidence="2">Binds 1 calcium ion per tetramer.</text>
</comment>
<comment type="domain">
    <text>The coiled coil region mediates oligomerization.</text>
</comment>
<comment type="PTM">
    <text evidence="2">The N-glycosyl content is primarily Man(9)GlcNAc, with a small amount of Man(8)GlcNAc.</text>
</comment>
<comment type="similarity">
    <text evidence="2">Belongs to the rotavirus NSP4 family.</text>
</comment>
<comment type="caution">
    <text>A candidate enterotoxigenic cleaved form of the protein has been suggested [PubMed:11090165], but it remains unclear whether this truncated form constitutes an active enterotoxin in vivo.</text>
</comment>
<feature type="chain" id="PRO_0000149628" description="Non-structural glycoprotein 4">
    <location>
        <begin position="1"/>
        <end position="175"/>
    </location>
</feature>
<feature type="topological domain" description="Lumenal" evidence="2">
    <location>
        <begin position="1"/>
        <end position="28"/>
    </location>
</feature>
<feature type="transmembrane region" description="Helical; Signal-anchor for type III membrane protein" evidence="2">
    <location>
        <begin position="29"/>
        <end position="51"/>
    </location>
</feature>
<feature type="topological domain" description="Cytoplasmic" evidence="2">
    <location>
        <begin position="52"/>
        <end position="175"/>
    </location>
</feature>
<feature type="region of interest" description="Required for interaction with microtubules">
    <location>
        <begin position="122"/>
        <end position="175"/>
    </location>
</feature>
<feature type="region of interest" description="ICP binding domain">
    <location>
        <begin position="159"/>
        <end position="175"/>
    </location>
</feature>
<feature type="binding site" evidence="2">
    <location>
        <position position="120"/>
    </location>
    <ligand>
        <name>Ca(2+)</name>
        <dbReference type="ChEBI" id="CHEBI:29108"/>
        <note>ligand shared between all tetrameric partners</note>
    </ligand>
</feature>
<feature type="binding site" evidence="2">
    <location>
        <position position="123"/>
    </location>
    <ligand>
        <name>Ca(2+)</name>
        <dbReference type="ChEBI" id="CHEBI:29108"/>
        <note>ligand shared between all tetrameric partners</note>
    </ligand>
</feature>
<feature type="glycosylation site" description="N-linked (GlcNAc...) asparagine; by host" evidence="2 12">
    <location>
        <position position="8"/>
    </location>
</feature>
<feature type="glycosylation site" description="N-linked (GlcNAc...) asparagine; by host" evidence="2 12">
    <location>
        <position position="18"/>
    </location>
</feature>
<feature type="mutagenesis site" description="No effect on receptor activity nor on oligomer formation. No effect on receptor activity nor on oligomer formation; when associated with C-71." evidence="6">
    <original>C</original>
    <variation>S</variation>
    <location>
        <position position="63"/>
    </location>
</feature>
<feature type="mutagenesis site" description="No effect on receptor activity nor on oligomer formation. No effect on receptor activity nor on oligomer formation; when associated with C-63." evidence="6">
    <original>C</original>
    <variation>S</variation>
    <location>
        <position position="71"/>
    </location>
</feature>
<feature type="mutagenesis site" description="Complete loss of interaction with integrin ITGA2." evidence="10">
    <original>E</original>
    <variation>A</variation>
    <location>
        <position position="120"/>
    </location>
</feature>
<feature type="mutagenesis site" description="Loss of ICP-binding activity." evidence="3">
    <original>Y</original>
    <variation>I</variation>
    <location>
        <position position="166"/>
    </location>
</feature>
<feature type="mutagenesis site" description="Abolishes receptor activity." evidence="6">
    <location>
        <begin position="174"/>
        <end position="175"/>
    </location>
</feature>
<feature type="mutagenesis site" description="Abolishes receptor activity." evidence="6">
    <original>M</original>
    <variation>G</variation>
    <variation>K</variation>
    <variation>I</variation>
    <location>
        <position position="175"/>
    </location>
</feature>
<feature type="mutagenesis site" description="Abolishes receptor activity. No effect on subcellular location." evidence="6">
    <location>
        <position position="175"/>
    </location>
</feature>
<feature type="helix" evidence="15">
    <location>
        <begin position="96"/>
        <end position="136"/>
    </location>
</feature>
<name>NSP4_ROTS1</name>
<keyword id="KW-0002">3D-structure</keyword>
<keyword id="KW-1072">Activation of host autophagy by virus</keyword>
<keyword id="KW-0106">Calcium</keyword>
<keyword id="KW-0903">Direct protein sequencing</keyword>
<keyword id="KW-0260">Enterotoxin</keyword>
<keyword id="KW-0325">Glycoprotein</keyword>
<keyword id="KW-1038">Host endoplasmic reticulum</keyword>
<keyword id="KW-1043">Host membrane</keyword>
<keyword id="KW-0945">Host-virus interaction</keyword>
<keyword id="KW-0407">Ion channel</keyword>
<keyword id="KW-0406">Ion transport</keyword>
<keyword id="KW-0472">Membrane</keyword>
<keyword id="KW-0479">Metal-binding</keyword>
<keyword id="KW-1185">Reference proteome</keyword>
<keyword id="KW-0964">Secreted</keyword>
<keyword id="KW-0735">Signal-anchor</keyword>
<keyword id="KW-0800">Toxin</keyword>
<keyword id="KW-0812">Transmembrane</keyword>
<keyword id="KW-1133">Transmembrane helix</keyword>
<keyword id="KW-0813">Transport</keyword>
<keyword id="KW-1182">Viral ion channel</keyword>
<keyword id="KW-0843">Virulence</keyword>
<evidence type="ECO:0000250" key="1">
    <source>
        <dbReference type="UniProtKB" id="P08434"/>
    </source>
</evidence>
<evidence type="ECO:0000255" key="2">
    <source>
        <dbReference type="HAMAP-Rule" id="MF_04091"/>
    </source>
</evidence>
<evidence type="ECO:0000269" key="3">
    <source>
    </source>
</evidence>
<evidence type="ECO:0000269" key="4">
    <source>
    </source>
</evidence>
<evidence type="ECO:0000269" key="5">
    <source>
    </source>
</evidence>
<evidence type="ECO:0000269" key="6">
    <source>
    </source>
</evidence>
<evidence type="ECO:0000269" key="7">
    <source>
    </source>
</evidence>
<evidence type="ECO:0000269" key="8">
    <source>
    </source>
</evidence>
<evidence type="ECO:0000269" key="9">
    <source>
    </source>
</evidence>
<evidence type="ECO:0000269" key="10">
    <source>
    </source>
</evidence>
<evidence type="ECO:0000269" key="11">
    <source>
    </source>
</evidence>
<evidence type="ECO:0000269" key="12">
    <source>
    </source>
</evidence>
<evidence type="ECO:0000269" key="13">
    <source>
    </source>
</evidence>
<evidence type="ECO:0000269" key="14">
    <source>
    </source>
</evidence>
<evidence type="ECO:0007829" key="15">
    <source>
        <dbReference type="PDB" id="2O1K"/>
    </source>
</evidence>